<name>MTNB_NEUCR</name>
<reference key="1">
    <citation type="journal article" date="2003" name="Nucleic Acids Res.">
        <title>What's in the genome of a filamentous fungus? Analysis of the Neurospora genome sequence.</title>
        <authorList>
            <person name="Mannhaupt G."/>
            <person name="Montrone C."/>
            <person name="Haase D."/>
            <person name="Mewes H.-W."/>
            <person name="Aign V."/>
            <person name="Hoheisel J.D."/>
            <person name="Fartmann B."/>
            <person name="Nyakatura G."/>
            <person name="Kempken F."/>
            <person name="Maier J."/>
            <person name="Schulte U."/>
        </authorList>
    </citation>
    <scope>NUCLEOTIDE SEQUENCE [LARGE SCALE GENOMIC DNA]</scope>
    <source>
        <strain>ATCC 24698 / 74-OR23-1A / CBS 708.71 / DSM 1257 / FGSC 987</strain>
    </source>
</reference>
<reference key="2">
    <citation type="journal article" date="2003" name="Nature">
        <title>The genome sequence of the filamentous fungus Neurospora crassa.</title>
        <authorList>
            <person name="Galagan J.E."/>
            <person name="Calvo S.E."/>
            <person name="Borkovich K.A."/>
            <person name="Selker E.U."/>
            <person name="Read N.D."/>
            <person name="Jaffe D.B."/>
            <person name="FitzHugh W."/>
            <person name="Ma L.-J."/>
            <person name="Smirnov S."/>
            <person name="Purcell S."/>
            <person name="Rehman B."/>
            <person name="Elkins T."/>
            <person name="Engels R."/>
            <person name="Wang S."/>
            <person name="Nielsen C.B."/>
            <person name="Butler J."/>
            <person name="Endrizzi M."/>
            <person name="Qui D."/>
            <person name="Ianakiev P."/>
            <person name="Bell-Pedersen D."/>
            <person name="Nelson M.A."/>
            <person name="Werner-Washburne M."/>
            <person name="Selitrennikoff C.P."/>
            <person name="Kinsey J.A."/>
            <person name="Braun E.L."/>
            <person name="Zelter A."/>
            <person name="Schulte U."/>
            <person name="Kothe G.O."/>
            <person name="Jedd G."/>
            <person name="Mewes H.-W."/>
            <person name="Staben C."/>
            <person name="Marcotte E."/>
            <person name="Greenberg D."/>
            <person name="Roy A."/>
            <person name="Foley K."/>
            <person name="Naylor J."/>
            <person name="Stange-Thomann N."/>
            <person name="Barrett R."/>
            <person name="Gnerre S."/>
            <person name="Kamal M."/>
            <person name="Kamvysselis M."/>
            <person name="Mauceli E.W."/>
            <person name="Bielke C."/>
            <person name="Rudd S."/>
            <person name="Frishman D."/>
            <person name="Krystofova S."/>
            <person name="Rasmussen C."/>
            <person name="Metzenberg R.L."/>
            <person name="Perkins D.D."/>
            <person name="Kroken S."/>
            <person name="Cogoni C."/>
            <person name="Macino G."/>
            <person name="Catcheside D.E.A."/>
            <person name="Li W."/>
            <person name="Pratt R.J."/>
            <person name="Osmani S.A."/>
            <person name="DeSouza C.P.C."/>
            <person name="Glass N.L."/>
            <person name="Orbach M.J."/>
            <person name="Berglund J.A."/>
            <person name="Voelker R."/>
            <person name="Yarden O."/>
            <person name="Plamann M."/>
            <person name="Seiler S."/>
            <person name="Dunlap J.C."/>
            <person name="Radford A."/>
            <person name="Aramayo R."/>
            <person name="Natvig D.O."/>
            <person name="Alex L.A."/>
            <person name="Mannhaupt G."/>
            <person name="Ebbole D.J."/>
            <person name="Freitag M."/>
            <person name="Paulsen I."/>
            <person name="Sachs M.S."/>
            <person name="Lander E.S."/>
            <person name="Nusbaum C."/>
            <person name="Birren B.W."/>
        </authorList>
    </citation>
    <scope>NUCLEOTIDE SEQUENCE [LARGE SCALE GENOMIC DNA]</scope>
    <source>
        <strain>ATCC 24698 / 74-OR23-1A / CBS 708.71 / DSM 1257 / FGSC 987</strain>
    </source>
</reference>
<proteinExistence type="inferred from homology"/>
<sequence length="258" mass="28794">MCSPTTENNNNNNDHLVQSSDPNHPANLIPALCAKFWTLGWVTGTGGGASIRSDDLVYLAPSGVQKELMKPDDIYVLSLAAQAQSLDKRQRVYLRSPANYKPSQCTPLFLAAFTKRNAGCCIHTHSHWAVLVTLILETQGAGKDREFMINNIEQIKGFGKGFGKSGNLGYHDTLKIPVIENTAHEEDLTEFLEEAMDKYPDTYAVLVRRHGVYVWGENVHKAKTMCESLDYLFQLAVEMKQLGLPWVTDIEPTVPTRK</sequence>
<organism>
    <name type="scientific">Neurospora crassa (strain ATCC 24698 / 74-OR23-1A / CBS 708.71 / DSM 1257 / FGSC 987)</name>
    <dbReference type="NCBI Taxonomy" id="367110"/>
    <lineage>
        <taxon>Eukaryota</taxon>
        <taxon>Fungi</taxon>
        <taxon>Dikarya</taxon>
        <taxon>Ascomycota</taxon>
        <taxon>Pezizomycotina</taxon>
        <taxon>Sordariomycetes</taxon>
        <taxon>Sordariomycetidae</taxon>
        <taxon>Sordariales</taxon>
        <taxon>Sordariaceae</taxon>
        <taxon>Neurospora</taxon>
    </lineage>
</organism>
<evidence type="ECO:0000255" key="1">
    <source>
        <dbReference type="HAMAP-Rule" id="MF_03116"/>
    </source>
</evidence>
<evidence type="ECO:0000256" key="2">
    <source>
        <dbReference type="SAM" id="MobiDB-lite"/>
    </source>
</evidence>
<keyword id="KW-0028">Amino-acid biosynthesis</keyword>
<keyword id="KW-0963">Cytoplasm</keyword>
<keyword id="KW-0456">Lyase</keyword>
<keyword id="KW-0479">Metal-binding</keyword>
<keyword id="KW-0486">Methionine biosynthesis</keyword>
<keyword id="KW-1185">Reference proteome</keyword>
<keyword id="KW-0862">Zinc</keyword>
<feature type="chain" id="PRO_0000393833" description="Methylthioribulose-1-phosphate dehydratase">
    <location>
        <begin position="1"/>
        <end position="258"/>
    </location>
</feature>
<feature type="region of interest" description="Disordered" evidence="2">
    <location>
        <begin position="1"/>
        <end position="21"/>
    </location>
</feature>
<feature type="active site" description="Proton donor/acceptor" evidence="1">
    <location>
        <position position="153"/>
    </location>
</feature>
<feature type="binding site" evidence="1">
    <location>
        <position position="105"/>
    </location>
    <ligand>
        <name>substrate</name>
    </ligand>
</feature>
<feature type="binding site" evidence="1">
    <location>
        <position position="123"/>
    </location>
    <ligand>
        <name>Zn(2+)</name>
        <dbReference type="ChEBI" id="CHEBI:29105"/>
    </ligand>
</feature>
<feature type="binding site" evidence="1">
    <location>
        <position position="125"/>
    </location>
    <ligand>
        <name>Zn(2+)</name>
        <dbReference type="ChEBI" id="CHEBI:29105"/>
    </ligand>
</feature>
<feature type="binding site" evidence="1">
    <location>
        <position position="210"/>
    </location>
    <ligand>
        <name>Zn(2+)</name>
        <dbReference type="ChEBI" id="CHEBI:29105"/>
    </ligand>
</feature>
<dbReference type="EC" id="4.2.1.109" evidence="1"/>
<dbReference type="EMBL" id="BX842628">
    <property type="protein sequence ID" value="CAE76315.1"/>
    <property type="molecule type" value="Genomic_DNA"/>
</dbReference>
<dbReference type="EMBL" id="CM002236">
    <property type="protein sequence ID" value="EAA35463.1"/>
    <property type="molecule type" value="Genomic_DNA"/>
</dbReference>
<dbReference type="RefSeq" id="XP_964699.1">
    <property type="nucleotide sequence ID" value="XM_959606.2"/>
</dbReference>
<dbReference type="SMR" id="Q7SF46"/>
<dbReference type="FunCoup" id="Q7SF46">
    <property type="interactions" value="245"/>
</dbReference>
<dbReference type="STRING" id="367110.Q7SF46"/>
<dbReference type="PaxDb" id="5141-EFNCRP00000009062"/>
<dbReference type="EnsemblFungi" id="EAA35463">
    <property type="protein sequence ID" value="EAA35463"/>
    <property type="gene ID" value="NCU09264"/>
</dbReference>
<dbReference type="GeneID" id="3880848"/>
<dbReference type="KEGG" id="ncr:NCU09264"/>
<dbReference type="VEuPathDB" id="FungiDB:NCU09264"/>
<dbReference type="HOGENOM" id="CLU_006033_4_0_1"/>
<dbReference type="InParanoid" id="Q7SF46"/>
<dbReference type="OMA" id="WFPGTSG"/>
<dbReference type="OrthoDB" id="191080at2759"/>
<dbReference type="UniPathway" id="UPA00904">
    <property type="reaction ID" value="UER00875"/>
</dbReference>
<dbReference type="Proteomes" id="UP000001805">
    <property type="component" value="Chromosome 1, Linkage Group I"/>
</dbReference>
<dbReference type="GO" id="GO:0005737">
    <property type="term" value="C:cytoplasm"/>
    <property type="evidence" value="ECO:0000318"/>
    <property type="project" value="GO_Central"/>
</dbReference>
<dbReference type="GO" id="GO:0046570">
    <property type="term" value="F:methylthioribulose 1-phosphate dehydratase activity"/>
    <property type="evidence" value="ECO:0000318"/>
    <property type="project" value="GO_Central"/>
</dbReference>
<dbReference type="GO" id="GO:0008270">
    <property type="term" value="F:zinc ion binding"/>
    <property type="evidence" value="ECO:0007669"/>
    <property type="project" value="UniProtKB-UniRule"/>
</dbReference>
<dbReference type="GO" id="GO:0019509">
    <property type="term" value="P:L-methionine salvage from methylthioadenosine"/>
    <property type="evidence" value="ECO:0000318"/>
    <property type="project" value="GO_Central"/>
</dbReference>
<dbReference type="FunFam" id="3.40.225.10:FF:000003">
    <property type="entry name" value="Methylthioribulose-1-phosphate dehydratase"/>
    <property type="match status" value="1"/>
</dbReference>
<dbReference type="Gene3D" id="3.40.225.10">
    <property type="entry name" value="Class II aldolase/adducin N-terminal domain"/>
    <property type="match status" value="1"/>
</dbReference>
<dbReference type="HAMAP" id="MF_03116">
    <property type="entry name" value="Salvage_MtnB_euk"/>
    <property type="match status" value="1"/>
</dbReference>
<dbReference type="InterPro" id="IPR001303">
    <property type="entry name" value="Aldolase_II/adducin_N"/>
</dbReference>
<dbReference type="InterPro" id="IPR036409">
    <property type="entry name" value="Aldolase_II/adducin_N_sf"/>
</dbReference>
<dbReference type="InterPro" id="IPR017714">
    <property type="entry name" value="MethylthioRu-1-P_deHdtase_MtnB"/>
</dbReference>
<dbReference type="InterPro" id="IPR027514">
    <property type="entry name" value="Salvage_MtnB_euk"/>
</dbReference>
<dbReference type="NCBIfam" id="TIGR03328">
    <property type="entry name" value="salvage_mtnB"/>
    <property type="match status" value="1"/>
</dbReference>
<dbReference type="PANTHER" id="PTHR10640">
    <property type="entry name" value="METHYLTHIORIBULOSE-1-PHOSPHATE DEHYDRATASE"/>
    <property type="match status" value="1"/>
</dbReference>
<dbReference type="PANTHER" id="PTHR10640:SF7">
    <property type="entry name" value="METHYLTHIORIBULOSE-1-PHOSPHATE DEHYDRATASE"/>
    <property type="match status" value="1"/>
</dbReference>
<dbReference type="Pfam" id="PF00596">
    <property type="entry name" value="Aldolase_II"/>
    <property type="match status" value="1"/>
</dbReference>
<dbReference type="SMART" id="SM01007">
    <property type="entry name" value="Aldolase_II"/>
    <property type="match status" value="1"/>
</dbReference>
<dbReference type="SUPFAM" id="SSF53639">
    <property type="entry name" value="AraD/HMP-PK domain-like"/>
    <property type="match status" value="1"/>
</dbReference>
<accession>Q7SF46</accession>
<comment type="function">
    <text evidence="1">Catalyzes the dehydration of methylthioribulose-1-phosphate (MTRu-1-P) into 2,3-diketo-5-methylthiopentyl-1-phosphate (DK-MTP-1-P).</text>
</comment>
<comment type="catalytic activity">
    <reaction evidence="1">
        <text>5-(methylsulfanyl)-D-ribulose 1-phosphate = 5-methylsulfanyl-2,3-dioxopentyl phosphate + H2O</text>
        <dbReference type="Rhea" id="RHEA:15549"/>
        <dbReference type="ChEBI" id="CHEBI:15377"/>
        <dbReference type="ChEBI" id="CHEBI:58548"/>
        <dbReference type="ChEBI" id="CHEBI:58828"/>
        <dbReference type="EC" id="4.2.1.109"/>
    </reaction>
</comment>
<comment type="cofactor">
    <cofactor evidence="1">
        <name>Zn(2+)</name>
        <dbReference type="ChEBI" id="CHEBI:29105"/>
    </cofactor>
    <text evidence="1">Binds 1 zinc ion per subunit.</text>
</comment>
<comment type="pathway">
    <text evidence="1">Amino-acid biosynthesis; L-methionine biosynthesis via salvage pathway; L-methionine from S-methyl-5-thio-alpha-D-ribose 1-phosphate: step 2/6.</text>
</comment>
<comment type="subcellular location">
    <subcellularLocation>
        <location evidence="1">Cytoplasm</location>
    </subcellularLocation>
</comment>
<comment type="similarity">
    <text evidence="1">Belongs to the aldolase class II family. MtnB subfamily.</text>
</comment>
<gene>
    <name evidence="1" type="primary">mde-1</name>
    <name type="synonym">mde1</name>
    <name type="ORF">B23L4.130</name>
    <name type="ORF">NCU09264</name>
</gene>
<protein>
    <recommendedName>
        <fullName evidence="1">Methylthioribulose-1-phosphate dehydratase</fullName>
        <shortName evidence="1">MTRu-1-P dehydratase</shortName>
        <ecNumber evidence="1">4.2.1.109</ecNumber>
    </recommendedName>
</protein>